<reference key="1">
    <citation type="journal article" date="1999" name="Mol. Phylogenet. Evol.">
        <title>Molecular evidence for a clade of turtles.</title>
        <authorList>
            <person name="Mannen H."/>
            <person name="Li S.S.-L."/>
        </authorList>
    </citation>
    <scope>NUCLEOTIDE SEQUENCE [MRNA]</scope>
    <source>
        <tissue>Muscle</tissue>
    </source>
</reference>
<sequence length="434" mass="47570">MSILKIQAREIFDSRGNPTIEVDLYTKKGLFRAAVPSGASTGIYEALELRDNDKTRFLGKGVSKAVEHVNKTIAPALVNKNVSVVEQEKIDKLMIEMDGSENKSKFGANAILGVSLAVCKAGAAEKDIPLYRHIADLAGNKEVILPVPAFNVINGGSHAGNKLAMQEFMILPIGAECFKEAMRIGAEVYHNLKNVIKEKYGKDATNVGDEGGFAPNILENKEALELLKTAISKAGYADKIVIGMDVAASEFYRDGKYDLDFKSPDDRSRYITPDQLADLYKGFVKNYPVVSIEDPFDQDDWPAWKKFTAESGIQVVGDDLTVTNPKRIAKAVQEKSCNCLLLKVNQIGSVTESLQACKLAQSNGWGVMVSHRSGETEDTFIADLVVGLCTGQIKTGAPCRSERLAKYNQLLRIEEELGSKARFAGRNFRNPRVN</sequence>
<accession>Q9W7L0</accession>
<dbReference type="EC" id="4.2.1.11"/>
<dbReference type="EMBL" id="AF072589">
    <property type="protein sequence ID" value="AAD41646.1"/>
    <property type="molecule type" value="mRNA"/>
</dbReference>
<dbReference type="SMR" id="Q9W7L0"/>
<dbReference type="UniPathway" id="UPA00109">
    <property type="reaction ID" value="UER00187"/>
</dbReference>
<dbReference type="GO" id="GO:0000015">
    <property type="term" value="C:phosphopyruvate hydratase complex"/>
    <property type="evidence" value="ECO:0007669"/>
    <property type="project" value="InterPro"/>
</dbReference>
<dbReference type="GO" id="GO:0000287">
    <property type="term" value="F:magnesium ion binding"/>
    <property type="evidence" value="ECO:0007669"/>
    <property type="project" value="InterPro"/>
</dbReference>
<dbReference type="GO" id="GO:0004634">
    <property type="term" value="F:phosphopyruvate hydratase activity"/>
    <property type="evidence" value="ECO:0007669"/>
    <property type="project" value="UniProtKB-EC"/>
</dbReference>
<dbReference type="GO" id="GO:0006096">
    <property type="term" value="P:glycolytic process"/>
    <property type="evidence" value="ECO:0007669"/>
    <property type="project" value="UniProtKB-UniPathway"/>
</dbReference>
<dbReference type="CDD" id="cd03313">
    <property type="entry name" value="enolase"/>
    <property type="match status" value="1"/>
</dbReference>
<dbReference type="FunFam" id="3.30.390.10:FF:000001">
    <property type="entry name" value="Enolase"/>
    <property type="match status" value="1"/>
</dbReference>
<dbReference type="FunFam" id="3.20.20.120:FF:000002">
    <property type="entry name" value="Enolase 1"/>
    <property type="match status" value="1"/>
</dbReference>
<dbReference type="Gene3D" id="3.20.20.120">
    <property type="entry name" value="Enolase-like C-terminal domain"/>
    <property type="match status" value="1"/>
</dbReference>
<dbReference type="Gene3D" id="3.30.390.10">
    <property type="entry name" value="Enolase-like, N-terminal domain"/>
    <property type="match status" value="1"/>
</dbReference>
<dbReference type="HAMAP" id="MF_00318">
    <property type="entry name" value="Enolase"/>
    <property type="match status" value="1"/>
</dbReference>
<dbReference type="InterPro" id="IPR000941">
    <property type="entry name" value="Enolase"/>
</dbReference>
<dbReference type="InterPro" id="IPR036849">
    <property type="entry name" value="Enolase-like_C_sf"/>
</dbReference>
<dbReference type="InterPro" id="IPR029017">
    <property type="entry name" value="Enolase-like_N"/>
</dbReference>
<dbReference type="InterPro" id="IPR020810">
    <property type="entry name" value="Enolase_C"/>
</dbReference>
<dbReference type="InterPro" id="IPR020809">
    <property type="entry name" value="Enolase_CS"/>
</dbReference>
<dbReference type="InterPro" id="IPR020811">
    <property type="entry name" value="Enolase_N"/>
</dbReference>
<dbReference type="NCBIfam" id="TIGR01060">
    <property type="entry name" value="eno"/>
    <property type="match status" value="1"/>
</dbReference>
<dbReference type="PANTHER" id="PTHR11902:SF12">
    <property type="entry name" value="ALPHA-ENOLASE"/>
    <property type="match status" value="1"/>
</dbReference>
<dbReference type="PANTHER" id="PTHR11902">
    <property type="entry name" value="ENOLASE"/>
    <property type="match status" value="1"/>
</dbReference>
<dbReference type="Pfam" id="PF00113">
    <property type="entry name" value="Enolase_C"/>
    <property type="match status" value="1"/>
</dbReference>
<dbReference type="Pfam" id="PF03952">
    <property type="entry name" value="Enolase_N"/>
    <property type="match status" value="1"/>
</dbReference>
<dbReference type="PIRSF" id="PIRSF001400">
    <property type="entry name" value="Enolase"/>
    <property type="match status" value="1"/>
</dbReference>
<dbReference type="PRINTS" id="PR00148">
    <property type="entry name" value="ENOLASE"/>
</dbReference>
<dbReference type="SFLD" id="SFLDS00001">
    <property type="entry name" value="Enolase"/>
    <property type="match status" value="1"/>
</dbReference>
<dbReference type="SFLD" id="SFLDF00002">
    <property type="entry name" value="enolase"/>
    <property type="match status" value="1"/>
</dbReference>
<dbReference type="SMART" id="SM01192">
    <property type="entry name" value="Enolase_C"/>
    <property type="match status" value="1"/>
</dbReference>
<dbReference type="SMART" id="SM01193">
    <property type="entry name" value="Enolase_N"/>
    <property type="match status" value="1"/>
</dbReference>
<dbReference type="SUPFAM" id="SSF51604">
    <property type="entry name" value="Enolase C-terminal domain-like"/>
    <property type="match status" value="1"/>
</dbReference>
<dbReference type="SUPFAM" id="SSF54826">
    <property type="entry name" value="Enolase N-terminal domain-like"/>
    <property type="match status" value="1"/>
</dbReference>
<dbReference type="PROSITE" id="PS00164">
    <property type="entry name" value="ENOLASE"/>
    <property type="match status" value="1"/>
</dbReference>
<keyword id="KW-0963">Cytoplasm</keyword>
<keyword id="KW-0324">Glycolysis</keyword>
<keyword id="KW-0456">Lyase</keyword>
<keyword id="KW-0460">Magnesium</keyword>
<keyword id="KW-0479">Metal-binding</keyword>
<comment type="catalytic activity">
    <reaction>
        <text>(2R)-2-phosphoglycerate = phosphoenolpyruvate + H2O</text>
        <dbReference type="Rhea" id="RHEA:10164"/>
        <dbReference type="ChEBI" id="CHEBI:15377"/>
        <dbReference type="ChEBI" id="CHEBI:58289"/>
        <dbReference type="ChEBI" id="CHEBI:58702"/>
        <dbReference type="EC" id="4.2.1.11"/>
    </reaction>
</comment>
<comment type="cofactor">
    <cofactor evidence="1">
        <name>Mg(2+)</name>
        <dbReference type="ChEBI" id="CHEBI:18420"/>
    </cofactor>
    <text evidence="1">Binds two Mg(2+) per subunit. Required for catalysis and for stabilizing the dimer.</text>
</comment>
<comment type="pathway">
    <text>Carbohydrate degradation; glycolysis; pyruvate from D-glyceraldehyde 3-phosphate: step 4/5.</text>
</comment>
<comment type="subunit">
    <text evidence="1">Homodimer.</text>
</comment>
<comment type="subcellular location">
    <subcellularLocation>
        <location>Cytoplasm</location>
    </subcellularLocation>
</comment>
<comment type="similarity">
    <text evidence="2">Belongs to the enolase family.</text>
</comment>
<name>ENOA_PYTRG</name>
<organism>
    <name type="scientific">Python regius</name>
    <name type="common">Ball python</name>
    <name type="synonym">Boa regia</name>
    <dbReference type="NCBI Taxonomy" id="51751"/>
    <lineage>
        <taxon>Eukaryota</taxon>
        <taxon>Metazoa</taxon>
        <taxon>Chordata</taxon>
        <taxon>Craniata</taxon>
        <taxon>Vertebrata</taxon>
        <taxon>Euteleostomi</taxon>
        <taxon>Lepidosauria</taxon>
        <taxon>Squamata</taxon>
        <taxon>Bifurcata</taxon>
        <taxon>Unidentata</taxon>
        <taxon>Episquamata</taxon>
        <taxon>Toxicofera</taxon>
        <taxon>Serpentes</taxon>
        <taxon>Henophidia</taxon>
        <taxon>Pythonidae</taxon>
        <taxon>Python</taxon>
    </lineage>
</organism>
<proteinExistence type="evidence at transcript level"/>
<protein>
    <recommendedName>
        <fullName>Alpha-enolase</fullName>
        <ecNumber>4.2.1.11</ecNumber>
    </recommendedName>
    <alternativeName>
        <fullName>2-phospho-D-glycerate hydro-lyase</fullName>
    </alternativeName>
    <alternativeName>
        <fullName>Phosphopyruvate hydratase</fullName>
    </alternativeName>
</protein>
<evidence type="ECO:0000250" key="1"/>
<evidence type="ECO:0000305" key="2"/>
<feature type="initiator methionine" description="Removed" evidence="1">
    <location>
        <position position="1"/>
    </location>
</feature>
<feature type="chain" id="PRO_0000134103" description="Alpha-enolase">
    <location>
        <begin position="2"/>
        <end position="434"/>
    </location>
</feature>
<feature type="active site" description="Proton donor" evidence="1">
    <location>
        <position position="210"/>
    </location>
</feature>
<feature type="active site" description="Proton acceptor" evidence="1">
    <location>
        <position position="343"/>
    </location>
</feature>
<feature type="binding site" evidence="1">
    <location>
        <position position="40"/>
    </location>
    <ligand>
        <name>Mg(2+)</name>
        <dbReference type="ChEBI" id="CHEBI:18420"/>
        <label>1</label>
    </ligand>
</feature>
<feature type="binding site" evidence="1">
    <location>
        <position position="158"/>
    </location>
    <ligand>
        <name>substrate</name>
    </ligand>
</feature>
<feature type="binding site" evidence="1">
    <location>
        <position position="167"/>
    </location>
    <ligand>
        <name>substrate</name>
    </ligand>
</feature>
<feature type="binding site" evidence="1">
    <location>
        <position position="245"/>
    </location>
    <ligand>
        <name>Mg(2+)</name>
        <dbReference type="ChEBI" id="CHEBI:18420"/>
        <label>2</label>
    </ligand>
</feature>
<feature type="binding site" evidence="1">
    <location>
        <position position="293"/>
    </location>
    <ligand>
        <name>Mg(2+)</name>
        <dbReference type="ChEBI" id="CHEBI:18420"/>
        <label>2</label>
    </ligand>
</feature>
<feature type="binding site" evidence="1">
    <location>
        <position position="293"/>
    </location>
    <ligand>
        <name>substrate</name>
    </ligand>
</feature>
<feature type="binding site" evidence="1">
    <location>
        <position position="318"/>
    </location>
    <ligand>
        <name>Mg(2+)</name>
        <dbReference type="ChEBI" id="CHEBI:18420"/>
        <label>2</label>
    </ligand>
</feature>
<feature type="binding site" evidence="1">
    <location>
        <position position="318"/>
    </location>
    <ligand>
        <name>substrate</name>
    </ligand>
</feature>
<feature type="binding site" evidence="1">
    <location>
        <begin position="370"/>
        <end position="373"/>
    </location>
    <ligand>
        <name>substrate</name>
    </ligand>
</feature>
<feature type="binding site" evidence="1">
    <location>
        <position position="394"/>
    </location>
    <ligand>
        <name>substrate</name>
    </ligand>
</feature>